<accession>B7NSW4</accession>
<proteinExistence type="inferred from homology"/>
<name>YOAH_ECO7I</name>
<protein>
    <recommendedName>
        <fullName evidence="1">UPF0181 protein YoaH</fullName>
    </recommendedName>
</protein>
<evidence type="ECO:0000255" key="1">
    <source>
        <dbReference type="HAMAP-Rule" id="MF_00507"/>
    </source>
</evidence>
<sequence length="59" mass="6554">MFAGLPSLTHEQQQKAVERIQELMAQGMSSGQAIALVAEELRANHSGERIVARFEDEDE</sequence>
<organism>
    <name type="scientific">Escherichia coli O7:K1 (strain IAI39 / ExPEC)</name>
    <dbReference type="NCBI Taxonomy" id="585057"/>
    <lineage>
        <taxon>Bacteria</taxon>
        <taxon>Pseudomonadati</taxon>
        <taxon>Pseudomonadota</taxon>
        <taxon>Gammaproteobacteria</taxon>
        <taxon>Enterobacterales</taxon>
        <taxon>Enterobacteriaceae</taxon>
        <taxon>Escherichia</taxon>
    </lineage>
</organism>
<reference key="1">
    <citation type="journal article" date="2009" name="PLoS Genet.">
        <title>Organised genome dynamics in the Escherichia coli species results in highly diverse adaptive paths.</title>
        <authorList>
            <person name="Touchon M."/>
            <person name="Hoede C."/>
            <person name="Tenaillon O."/>
            <person name="Barbe V."/>
            <person name="Baeriswyl S."/>
            <person name="Bidet P."/>
            <person name="Bingen E."/>
            <person name="Bonacorsi S."/>
            <person name="Bouchier C."/>
            <person name="Bouvet O."/>
            <person name="Calteau A."/>
            <person name="Chiapello H."/>
            <person name="Clermont O."/>
            <person name="Cruveiller S."/>
            <person name="Danchin A."/>
            <person name="Diard M."/>
            <person name="Dossat C."/>
            <person name="Karoui M.E."/>
            <person name="Frapy E."/>
            <person name="Garry L."/>
            <person name="Ghigo J.M."/>
            <person name="Gilles A.M."/>
            <person name="Johnson J."/>
            <person name="Le Bouguenec C."/>
            <person name="Lescat M."/>
            <person name="Mangenot S."/>
            <person name="Martinez-Jehanne V."/>
            <person name="Matic I."/>
            <person name="Nassif X."/>
            <person name="Oztas S."/>
            <person name="Petit M.A."/>
            <person name="Pichon C."/>
            <person name="Rouy Z."/>
            <person name="Ruf C.S."/>
            <person name="Schneider D."/>
            <person name="Tourret J."/>
            <person name="Vacherie B."/>
            <person name="Vallenet D."/>
            <person name="Medigue C."/>
            <person name="Rocha E.P.C."/>
            <person name="Denamur E."/>
        </authorList>
    </citation>
    <scope>NUCLEOTIDE SEQUENCE [LARGE SCALE GENOMIC DNA]</scope>
    <source>
        <strain>IAI39 / ExPEC</strain>
    </source>
</reference>
<gene>
    <name evidence="1" type="primary">yoaH</name>
    <name type="ordered locus">ECIAI39_1241</name>
</gene>
<dbReference type="EMBL" id="CU928164">
    <property type="protein sequence ID" value="CAR17375.1"/>
    <property type="molecule type" value="Genomic_DNA"/>
</dbReference>
<dbReference type="RefSeq" id="WP_000457334.1">
    <property type="nucleotide sequence ID" value="NC_011750.1"/>
</dbReference>
<dbReference type="RefSeq" id="YP_002407249.1">
    <property type="nucleotide sequence ID" value="NC_011750.1"/>
</dbReference>
<dbReference type="SMR" id="B7NSW4"/>
<dbReference type="STRING" id="585057.ECIAI39_1241"/>
<dbReference type="KEGG" id="ect:ECIAI39_1241"/>
<dbReference type="PATRIC" id="fig|585057.6.peg.1299"/>
<dbReference type="HOGENOM" id="CLU_185263_0_0_6"/>
<dbReference type="Proteomes" id="UP000000749">
    <property type="component" value="Chromosome"/>
</dbReference>
<dbReference type="HAMAP" id="MF_00507">
    <property type="entry name" value="UPF0181"/>
    <property type="match status" value="1"/>
</dbReference>
<dbReference type="InterPro" id="IPR005371">
    <property type="entry name" value="UPF0181"/>
</dbReference>
<dbReference type="NCBIfam" id="NF003476">
    <property type="entry name" value="PRK05114.1"/>
    <property type="match status" value="1"/>
</dbReference>
<dbReference type="Pfam" id="PF03701">
    <property type="entry name" value="UPF0181"/>
    <property type="match status" value="1"/>
</dbReference>
<comment type="similarity">
    <text evidence="1">Belongs to the UPF0181 family.</text>
</comment>
<feature type="chain" id="PRO_1000127043" description="UPF0181 protein YoaH">
    <location>
        <begin position="1"/>
        <end position="59"/>
    </location>
</feature>